<gene>
    <name type="ORF">B0304.4</name>
</gene>
<feature type="chain" id="PRO_0000065068" description="Uncharacterized protein B0304.4">
    <location>
        <begin position="1"/>
        <end position="128"/>
    </location>
</feature>
<accession>Q10933</accession>
<keyword id="KW-1185">Reference proteome</keyword>
<dbReference type="EMBL" id="FO080166">
    <property type="protein sequence ID" value="CCD61736.1"/>
    <property type="molecule type" value="Genomic_DNA"/>
</dbReference>
<dbReference type="PIR" id="T15320">
    <property type="entry name" value="T15320"/>
</dbReference>
<dbReference type="RefSeq" id="NP_494799.1">
    <property type="nucleotide sequence ID" value="NM_062398.8"/>
</dbReference>
<dbReference type="SMR" id="Q10933"/>
<dbReference type="FunCoup" id="Q10933">
    <property type="interactions" value="63"/>
</dbReference>
<dbReference type="STRING" id="6239.B0304.4.1"/>
<dbReference type="PaxDb" id="6239-B0304.4"/>
<dbReference type="EnsemblMetazoa" id="B0304.4.1">
    <property type="protein sequence ID" value="B0304.4.1"/>
    <property type="gene ID" value="WBGene00015136"/>
</dbReference>
<dbReference type="GeneID" id="181918"/>
<dbReference type="KEGG" id="cel:CELE_B0304.4"/>
<dbReference type="UCSC" id="B0304.4">
    <property type="organism name" value="c. elegans"/>
</dbReference>
<dbReference type="AGR" id="WB:WBGene00015136"/>
<dbReference type="CTD" id="181918"/>
<dbReference type="WormBase" id="B0304.4">
    <property type="protein sequence ID" value="CE03872"/>
    <property type="gene ID" value="WBGene00015136"/>
</dbReference>
<dbReference type="eggNOG" id="ENOG502TJBB">
    <property type="taxonomic scope" value="Eukaryota"/>
</dbReference>
<dbReference type="HOGENOM" id="CLU_139346_0_0_1"/>
<dbReference type="InParanoid" id="Q10933"/>
<dbReference type="OMA" id="RRANIMF"/>
<dbReference type="OrthoDB" id="5827334at2759"/>
<dbReference type="PRO" id="PR:Q10933"/>
<dbReference type="Proteomes" id="UP000001940">
    <property type="component" value="Chromosome II"/>
</dbReference>
<dbReference type="Bgee" id="WBGene00015136">
    <property type="expression patterns" value="Expressed in germ line (C elegans) and 3 other cell types or tissues"/>
</dbReference>
<sequence length="128" mass="14394">MDSSNPSSLPLEKSSGNVQKGKLLNIWSRCIAQPSSFLGSSISRFWANADIKNRVCSAAIGRVNFVSKCLKKFPEVSLSCNISASLSLNTGKEKVKNEDLEKQERCHKVAMIEYEIQNLERQLKKRQF</sequence>
<reference key="1">
    <citation type="journal article" date="1998" name="Science">
        <title>Genome sequence of the nematode C. elegans: a platform for investigating biology.</title>
        <authorList>
            <consortium name="The C. elegans sequencing consortium"/>
        </authorList>
    </citation>
    <scope>NUCLEOTIDE SEQUENCE [LARGE SCALE GENOMIC DNA]</scope>
    <source>
        <strain>Bristol N2</strain>
    </source>
</reference>
<organism>
    <name type="scientific">Caenorhabditis elegans</name>
    <dbReference type="NCBI Taxonomy" id="6239"/>
    <lineage>
        <taxon>Eukaryota</taxon>
        <taxon>Metazoa</taxon>
        <taxon>Ecdysozoa</taxon>
        <taxon>Nematoda</taxon>
        <taxon>Chromadorea</taxon>
        <taxon>Rhabditida</taxon>
        <taxon>Rhabditina</taxon>
        <taxon>Rhabditomorpha</taxon>
        <taxon>Rhabditoidea</taxon>
        <taxon>Rhabditidae</taxon>
        <taxon>Peloderinae</taxon>
        <taxon>Caenorhabditis</taxon>
    </lineage>
</organism>
<proteinExistence type="predicted"/>
<protein>
    <recommendedName>
        <fullName>Uncharacterized protein B0304.4</fullName>
    </recommendedName>
</protein>
<name>YT24_CAEEL</name>